<keyword id="KW-1003">Cell membrane</keyword>
<keyword id="KW-0407">Ion channel</keyword>
<keyword id="KW-0406">Ion transport</keyword>
<keyword id="KW-0472">Membrane</keyword>
<keyword id="KW-1185">Reference proteome</keyword>
<keyword id="KW-0812">Transmembrane</keyword>
<keyword id="KW-1133">Transmembrane helix</keyword>
<keyword id="KW-0813">Transport</keyword>
<proteinExistence type="inferred from homology"/>
<sequence length="125" mass="13876">MLKEFKEFIARGNVMDLAVGVIIGAAFTAIVKSLVSNLINPLIGIFLGKIDLSNLVFSIGSAHFRYGSFLNEVINFLIIAFVVFLMVKGINKVMPKKEEEAVKEGPSKEEEYLGQIVELLKKQDK</sequence>
<name>MSCL_LIMF3</name>
<protein>
    <recommendedName>
        <fullName evidence="1">Large-conductance mechanosensitive channel</fullName>
    </recommendedName>
</protein>
<evidence type="ECO:0000255" key="1">
    <source>
        <dbReference type="HAMAP-Rule" id="MF_00115"/>
    </source>
</evidence>
<comment type="function">
    <text evidence="1">Channel that opens in response to stretch forces in the membrane lipid bilayer. May participate in the regulation of osmotic pressure changes within the cell.</text>
</comment>
<comment type="subunit">
    <text evidence="1">Homopentamer.</text>
</comment>
<comment type="subcellular location">
    <subcellularLocation>
        <location evidence="1">Cell membrane</location>
        <topology evidence="1">Multi-pass membrane protein</topology>
    </subcellularLocation>
</comment>
<comment type="similarity">
    <text evidence="1">Belongs to the MscL family.</text>
</comment>
<dbReference type="EMBL" id="AP008937">
    <property type="protein sequence ID" value="BAG28173.1"/>
    <property type="molecule type" value="Genomic_DNA"/>
</dbReference>
<dbReference type="RefSeq" id="WP_003685614.1">
    <property type="nucleotide sequence ID" value="NC_010610.1"/>
</dbReference>
<dbReference type="SMR" id="B2GEU1"/>
<dbReference type="KEGG" id="lfe:LAF_1837"/>
<dbReference type="eggNOG" id="COG1970">
    <property type="taxonomic scope" value="Bacteria"/>
</dbReference>
<dbReference type="HOGENOM" id="CLU_095787_0_0_9"/>
<dbReference type="Proteomes" id="UP000001697">
    <property type="component" value="Chromosome"/>
</dbReference>
<dbReference type="GO" id="GO:0005886">
    <property type="term" value="C:plasma membrane"/>
    <property type="evidence" value="ECO:0007669"/>
    <property type="project" value="UniProtKB-SubCell"/>
</dbReference>
<dbReference type="GO" id="GO:0008381">
    <property type="term" value="F:mechanosensitive monoatomic ion channel activity"/>
    <property type="evidence" value="ECO:0007669"/>
    <property type="project" value="UniProtKB-UniRule"/>
</dbReference>
<dbReference type="Gene3D" id="1.10.1200.120">
    <property type="entry name" value="Large-conductance mechanosensitive channel, MscL, domain 1"/>
    <property type="match status" value="1"/>
</dbReference>
<dbReference type="HAMAP" id="MF_00115">
    <property type="entry name" value="MscL"/>
    <property type="match status" value="1"/>
</dbReference>
<dbReference type="InterPro" id="IPR019823">
    <property type="entry name" value="Mechanosensitive_channel_CS"/>
</dbReference>
<dbReference type="InterPro" id="IPR001185">
    <property type="entry name" value="MS_channel"/>
</dbReference>
<dbReference type="InterPro" id="IPR037673">
    <property type="entry name" value="MSC/AndL"/>
</dbReference>
<dbReference type="InterPro" id="IPR036019">
    <property type="entry name" value="MscL_channel"/>
</dbReference>
<dbReference type="NCBIfam" id="TIGR00220">
    <property type="entry name" value="mscL"/>
    <property type="match status" value="1"/>
</dbReference>
<dbReference type="NCBIfam" id="NF001842">
    <property type="entry name" value="PRK00567.1-3"/>
    <property type="match status" value="1"/>
</dbReference>
<dbReference type="PANTHER" id="PTHR30266:SF2">
    <property type="entry name" value="LARGE-CONDUCTANCE MECHANOSENSITIVE CHANNEL"/>
    <property type="match status" value="1"/>
</dbReference>
<dbReference type="PANTHER" id="PTHR30266">
    <property type="entry name" value="MECHANOSENSITIVE CHANNEL MSCL"/>
    <property type="match status" value="1"/>
</dbReference>
<dbReference type="Pfam" id="PF01741">
    <property type="entry name" value="MscL"/>
    <property type="match status" value="1"/>
</dbReference>
<dbReference type="PRINTS" id="PR01264">
    <property type="entry name" value="MECHCHANNEL"/>
</dbReference>
<dbReference type="SUPFAM" id="SSF81330">
    <property type="entry name" value="Gated mechanosensitive channel"/>
    <property type="match status" value="1"/>
</dbReference>
<dbReference type="PROSITE" id="PS01327">
    <property type="entry name" value="MSCL"/>
    <property type="match status" value="1"/>
</dbReference>
<organism>
    <name type="scientific">Limosilactobacillus fermentum (strain NBRC 3956 / LMG 18251)</name>
    <name type="common">Lactobacillus fermentum</name>
    <dbReference type="NCBI Taxonomy" id="334390"/>
    <lineage>
        <taxon>Bacteria</taxon>
        <taxon>Bacillati</taxon>
        <taxon>Bacillota</taxon>
        <taxon>Bacilli</taxon>
        <taxon>Lactobacillales</taxon>
        <taxon>Lactobacillaceae</taxon>
        <taxon>Limosilactobacillus</taxon>
    </lineage>
</organism>
<gene>
    <name evidence="1" type="primary">mscL</name>
    <name type="ordered locus">LAF_1837</name>
</gene>
<accession>B2GEU1</accession>
<reference key="1">
    <citation type="journal article" date="2008" name="DNA Res.">
        <title>Comparative genome analysis of Lactobacillus reuteri and Lactobacillus fermentum reveal a genomic island for reuterin and cobalamin production.</title>
        <authorList>
            <person name="Morita H."/>
            <person name="Toh H."/>
            <person name="Fukuda S."/>
            <person name="Horikawa H."/>
            <person name="Oshima K."/>
            <person name="Suzuki T."/>
            <person name="Murakami M."/>
            <person name="Hisamatsu S."/>
            <person name="Kato Y."/>
            <person name="Takizawa T."/>
            <person name="Fukuoka H."/>
            <person name="Yoshimura T."/>
            <person name="Itoh K."/>
            <person name="O'Sullivan D.J."/>
            <person name="McKay L.L."/>
            <person name="Ohno H."/>
            <person name="Kikuchi J."/>
            <person name="Masaoka T."/>
            <person name="Hattori M."/>
        </authorList>
    </citation>
    <scope>NUCLEOTIDE SEQUENCE [LARGE SCALE GENOMIC DNA]</scope>
    <source>
        <strain>NBRC 3956 / LMG 18251</strain>
    </source>
</reference>
<feature type="chain" id="PRO_1000094900" description="Large-conductance mechanosensitive channel">
    <location>
        <begin position="1"/>
        <end position="125"/>
    </location>
</feature>
<feature type="transmembrane region" description="Helical" evidence="1">
    <location>
        <begin position="19"/>
        <end position="39"/>
    </location>
</feature>
<feature type="transmembrane region" description="Helical" evidence="1">
    <location>
        <begin position="42"/>
        <end position="62"/>
    </location>
</feature>
<feature type="transmembrane region" description="Helical" evidence="1">
    <location>
        <begin position="67"/>
        <end position="87"/>
    </location>
</feature>